<protein>
    <recommendedName>
        <fullName evidence="2">Translation initiation factor IF-2</fullName>
    </recommendedName>
</protein>
<comment type="function">
    <text evidence="2">One of the essential components for the initiation of protein synthesis. Protects formylmethionyl-tRNA from spontaneous hydrolysis and promotes its binding to the 30S ribosomal subunits. Also involved in the hydrolysis of GTP during the formation of the 70S ribosomal complex.</text>
</comment>
<comment type="subcellular location">
    <subcellularLocation>
        <location evidence="2">Cytoplasm</location>
    </subcellularLocation>
</comment>
<comment type="similarity">
    <text evidence="2">Belongs to the TRAFAC class translation factor GTPase superfamily. Classic translation factor GTPase family. IF-2 subfamily.</text>
</comment>
<proteinExistence type="inferred from homology"/>
<feature type="chain" id="PRO_0000335485" description="Translation initiation factor IF-2">
    <location>
        <begin position="1"/>
        <end position="852"/>
    </location>
</feature>
<feature type="domain" description="tr-type G">
    <location>
        <begin position="347"/>
        <end position="516"/>
    </location>
</feature>
<feature type="region of interest" description="Disordered" evidence="3">
    <location>
        <begin position="1"/>
        <end position="240"/>
    </location>
</feature>
<feature type="region of interest" description="G1" evidence="1">
    <location>
        <begin position="356"/>
        <end position="363"/>
    </location>
</feature>
<feature type="region of interest" description="G2" evidence="1">
    <location>
        <begin position="381"/>
        <end position="385"/>
    </location>
</feature>
<feature type="region of interest" description="G3" evidence="1">
    <location>
        <begin position="402"/>
        <end position="405"/>
    </location>
</feature>
<feature type="region of interest" description="G4" evidence="1">
    <location>
        <begin position="456"/>
        <end position="459"/>
    </location>
</feature>
<feature type="region of interest" description="G5" evidence="1">
    <location>
        <begin position="492"/>
        <end position="494"/>
    </location>
</feature>
<feature type="compositionally biased region" description="Basic and acidic residues" evidence="3">
    <location>
        <begin position="78"/>
        <end position="90"/>
    </location>
</feature>
<feature type="compositionally biased region" description="Polar residues" evidence="3">
    <location>
        <begin position="106"/>
        <end position="120"/>
    </location>
</feature>
<feature type="compositionally biased region" description="Gly residues" evidence="3">
    <location>
        <begin position="150"/>
        <end position="200"/>
    </location>
</feature>
<feature type="compositionally biased region" description="Basic and acidic residues" evidence="3">
    <location>
        <begin position="227"/>
        <end position="240"/>
    </location>
</feature>
<feature type="binding site" evidence="2">
    <location>
        <begin position="356"/>
        <end position="363"/>
    </location>
    <ligand>
        <name>GTP</name>
        <dbReference type="ChEBI" id="CHEBI:37565"/>
    </ligand>
</feature>
<feature type="binding site" evidence="2">
    <location>
        <begin position="402"/>
        <end position="406"/>
    </location>
    <ligand>
        <name>GTP</name>
        <dbReference type="ChEBI" id="CHEBI:37565"/>
    </ligand>
</feature>
<feature type="binding site" evidence="2">
    <location>
        <begin position="456"/>
        <end position="459"/>
    </location>
    <ligand>
        <name>GTP</name>
        <dbReference type="ChEBI" id="CHEBI:37565"/>
    </ligand>
</feature>
<dbReference type="EMBL" id="CP000350">
    <property type="protein sequence ID" value="ABJ75589.1"/>
    <property type="molecule type" value="Genomic_DNA"/>
</dbReference>
<dbReference type="RefSeq" id="WP_011671660.1">
    <property type="nucleotide sequence ID" value="NC_008510.1"/>
</dbReference>
<dbReference type="SMR" id="Q04U31"/>
<dbReference type="KEGG" id="lbj:LBJ_0946"/>
<dbReference type="HOGENOM" id="CLU_006301_5_1_12"/>
<dbReference type="Proteomes" id="UP000000656">
    <property type="component" value="Chromosome 1"/>
</dbReference>
<dbReference type="GO" id="GO:0005829">
    <property type="term" value="C:cytosol"/>
    <property type="evidence" value="ECO:0007669"/>
    <property type="project" value="TreeGrafter"/>
</dbReference>
<dbReference type="GO" id="GO:0005525">
    <property type="term" value="F:GTP binding"/>
    <property type="evidence" value="ECO:0007669"/>
    <property type="project" value="UniProtKB-KW"/>
</dbReference>
<dbReference type="GO" id="GO:0003924">
    <property type="term" value="F:GTPase activity"/>
    <property type="evidence" value="ECO:0007669"/>
    <property type="project" value="UniProtKB-UniRule"/>
</dbReference>
<dbReference type="GO" id="GO:0003743">
    <property type="term" value="F:translation initiation factor activity"/>
    <property type="evidence" value="ECO:0007669"/>
    <property type="project" value="UniProtKB-UniRule"/>
</dbReference>
<dbReference type="CDD" id="cd01887">
    <property type="entry name" value="IF2_eIF5B"/>
    <property type="match status" value="1"/>
</dbReference>
<dbReference type="CDD" id="cd03702">
    <property type="entry name" value="IF2_mtIF2_II"/>
    <property type="match status" value="1"/>
</dbReference>
<dbReference type="CDD" id="cd03692">
    <property type="entry name" value="mtIF2_IVc"/>
    <property type="match status" value="1"/>
</dbReference>
<dbReference type="FunFam" id="2.40.30.10:FF:000008">
    <property type="entry name" value="Translation initiation factor IF-2"/>
    <property type="match status" value="1"/>
</dbReference>
<dbReference type="FunFam" id="2.40.30.10:FF:000054">
    <property type="entry name" value="Translation initiation factor IF-2"/>
    <property type="match status" value="1"/>
</dbReference>
<dbReference type="FunFam" id="3.40.50.10050:FF:000001">
    <property type="entry name" value="Translation initiation factor IF-2"/>
    <property type="match status" value="1"/>
</dbReference>
<dbReference type="FunFam" id="3.40.50.300:FF:000019">
    <property type="entry name" value="Translation initiation factor IF-2"/>
    <property type="match status" value="1"/>
</dbReference>
<dbReference type="Gene3D" id="3.40.50.300">
    <property type="entry name" value="P-loop containing nucleotide triphosphate hydrolases"/>
    <property type="match status" value="1"/>
</dbReference>
<dbReference type="Gene3D" id="2.40.30.10">
    <property type="entry name" value="Translation factors"/>
    <property type="match status" value="2"/>
</dbReference>
<dbReference type="Gene3D" id="3.40.50.10050">
    <property type="entry name" value="Translation initiation factor IF- 2, domain 3"/>
    <property type="match status" value="1"/>
</dbReference>
<dbReference type="HAMAP" id="MF_00100_B">
    <property type="entry name" value="IF_2_B"/>
    <property type="match status" value="1"/>
</dbReference>
<dbReference type="InterPro" id="IPR053905">
    <property type="entry name" value="EF-G-like_DII"/>
</dbReference>
<dbReference type="InterPro" id="IPR004161">
    <property type="entry name" value="EFTu-like_2"/>
</dbReference>
<dbReference type="InterPro" id="IPR044145">
    <property type="entry name" value="IF2_II"/>
</dbReference>
<dbReference type="InterPro" id="IPR006847">
    <property type="entry name" value="IF2_N"/>
</dbReference>
<dbReference type="InterPro" id="IPR027417">
    <property type="entry name" value="P-loop_NTPase"/>
</dbReference>
<dbReference type="InterPro" id="IPR005225">
    <property type="entry name" value="Small_GTP-bd"/>
</dbReference>
<dbReference type="InterPro" id="IPR000795">
    <property type="entry name" value="T_Tr_GTP-bd_dom"/>
</dbReference>
<dbReference type="InterPro" id="IPR000178">
    <property type="entry name" value="TF_IF2_bacterial-like"/>
</dbReference>
<dbReference type="InterPro" id="IPR015760">
    <property type="entry name" value="TIF_IF2"/>
</dbReference>
<dbReference type="InterPro" id="IPR023115">
    <property type="entry name" value="TIF_IF2_dom3"/>
</dbReference>
<dbReference type="InterPro" id="IPR036925">
    <property type="entry name" value="TIF_IF2_dom3_sf"/>
</dbReference>
<dbReference type="InterPro" id="IPR009000">
    <property type="entry name" value="Transl_B-barrel_sf"/>
</dbReference>
<dbReference type="NCBIfam" id="TIGR00487">
    <property type="entry name" value="IF-2"/>
    <property type="match status" value="1"/>
</dbReference>
<dbReference type="NCBIfam" id="TIGR00231">
    <property type="entry name" value="small_GTP"/>
    <property type="match status" value="1"/>
</dbReference>
<dbReference type="PANTHER" id="PTHR43381:SF5">
    <property type="entry name" value="TR-TYPE G DOMAIN-CONTAINING PROTEIN"/>
    <property type="match status" value="1"/>
</dbReference>
<dbReference type="PANTHER" id="PTHR43381">
    <property type="entry name" value="TRANSLATION INITIATION FACTOR IF-2-RELATED"/>
    <property type="match status" value="1"/>
</dbReference>
<dbReference type="Pfam" id="PF22042">
    <property type="entry name" value="EF-G_D2"/>
    <property type="match status" value="1"/>
</dbReference>
<dbReference type="Pfam" id="PF00009">
    <property type="entry name" value="GTP_EFTU"/>
    <property type="match status" value="1"/>
</dbReference>
<dbReference type="Pfam" id="PF03144">
    <property type="entry name" value="GTP_EFTU_D2"/>
    <property type="match status" value="1"/>
</dbReference>
<dbReference type="Pfam" id="PF11987">
    <property type="entry name" value="IF-2"/>
    <property type="match status" value="1"/>
</dbReference>
<dbReference type="Pfam" id="PF04760">
    <property type="entry name" value="IF2_N"/>
    <property type="match status" value="1"/>
</dbReference>
<dbReference type="SUPFAM" id="SSF52156">
    <property type="entry name" value="Initiation factor IF2/eIF5b, domain 3"/>
    <property type="match status" value="1"/>
</dbReference>
<dbReference type="SUPFAM" id="SSF52540">
    <property type="entry name" value="P-loop containing nucleoside triphosphate hydrolases"/>
    <property type="match status" value="1"/>
</dbReference>
<dbReference type="SUPFAM" id="SSF50447">
    <property type="entry name" value="Translation proteins"/>
    <property type="match status" value="2"/>
</dbReference>
<dbReference type="PROSITE" id="PS51722">
    <property type="entry name" value="G_TR_2"/>
    <property type="match status" value="1"/>
</dbReference>
<dbReference type="PROSITE" id="PS01176">
    <property type="entry name" value="IF2"/>
    <property type="match status" value="1"/>
</dbReference>
<gene>
    <name evidence="2" type="primary">infB</name>
    <name type="ordered locus">LBJ_0946</name>
</gene>
<organism>
    <name type="scientific">Leptospira borgpetersenii serovar Hardjo-bovis (strain JB197)</name>
    <dbReference type="NCBI Taxonomy" id="355277"/>
    <lineage>
        <taxon>Bacteria</taxon>
        <taxon>Pseudomonadati</taxon>
        <taxon>Spirochaetota</taxon>
        <taxon>Spirochaetia</taxon>
        <taxon>Leptospirales</taxon>
        <taxon>Leptospiraceae</taxon>
        <taxon>Leptospira</taxon>
    </lineage>
</organism>
<reference key="1">
    <citation type="journal article" date="2006" name="Proc. Natl. Acad. Sci. U.S.A.">
        <title>Genome reduction in Leptospira borgpetersenii reflects limited transmission potential.</title>
        <authorList>
            <person name="Bulach D.M."/>
            <person name="Zuerner R.L."/>
            <person name="Wilson P."/>
            <person name="Seemann T."/>
            <person name="McGrath A."/>
            <person name="Cullen P.A."/>
            <person name="Davis J."/>
            <person name="Johnson M."/>
            <person name="Kuczek E."/>
            <person name="Alt D.P."/>
            <person name="Peterson-Burch B."/>
            <person name="Coppel R.L."/>
            <person name="Rood J.I."/>
            <person name="Davies J.K."/>
            <person name="Adler B."/>
        </authorList>
    </citation>
    <scope>NUCLEOTIDE SEQUENCE [LARGE SCALE GENOMIC DNA]</scope>
    <source>
        <strain>JB197</strain>
    </source>
</reference>
<evidence type="ECO:0000250" key="1"/>
<evidence type="ECO:0000255" key="2">
    <source>
        <dbReference type="HAMAP-Rule" id="MF_00100"/>
    </source>
</evidence>
<evidence type="ECO:0000256" key="3">
    <source>
        <dbReference type="SAM" id="MobiDB-lite"/>
    </source>
</evidence>
<sequence>MEDKNKTIKETLQGAADAGKRKKLIIKKKGDENSAPSSASPKKETIAESAPVKPLTPLPSRGDSGQSPIVRPAPSASKEVKYEESSRKQDSGQSGSRPLRDKDSQVRPSGDSSYPVSRSPFQKEDSNIIVSRPTQRPVRPNPGGSYQGNRGPGQGGGYQGNRGPGQGGGYQGNRGPGQQTGPGNRFGGSGPGNRSGGPGGRPMPITSAEVELSQARGSTGASKKKGHDKEKTSSDKRDFSGAENTKFFKQRFKKTKVVGVSGVSVPKEITVLENVQVGELAKKMNLKPGDVIGKLMKMGMMVTINNIIDAETAALLADEYGCKVKVVSLYEETIIEEEKDNEGDYINRPPVVTIMGHVDHGKTKLLDTIRRSSVIDTESGGITQHIGAYQVKTARGLITFLDTPGHEAFTSMRARGAKVTDIVILVVAADDGVMPQTLEAISHAKAAEVPIIVAINKIDLPTANPDKIMQELANHGLQSEEWGGQTMYVKISARENIGIDKLLEVILLQAEVMDLKANPKRKAKGTIIEAKLDPGRGSVATVLIQNGTLRVGDPFVAGVFSGRVRAMYNDLGQLIEEAGPAFPAQVTGIDGVPDAGAPFDAMADEKEARNISQHRIEFEKIGNAGAAAGTTSKVTLENMNEYIKLGALKELKVIIKADVRGSAEAIKESLEKLSTPEVKLNVIQSGAGAIVDMDVMLASASNALIIGFHVRANPKTIALAEKEQVQIKYYNIIYQVVDEIKLAMEGLLEPEKIEEVIGTAEIREIFKVSKIGNIAGCMVTSGKIQKSANVRVISDGVTKFDGKLKSLKRVKDDVNDVVSGFECGIQVDGYNDFKVGDTIEAYNVTVIKRKLE</sequence>
<accession>Q04U31</accession>
<name>IF2_LEPBJ</name>
<keyword id="KW-0963">Cytoplasm</keyword>
<keyword id="KW-0342">GTP-binding</keyword>
<keyword id="KW-0396">Initiation factor</keyword>
<keyword id="KW-0547">Nucleotide-binding</keyword>
<keyword id="KW-0648">Protein biosynthesis</keyword>